<keyword id="KW-1003">Cell membrane</keyword>
<keyword id="KW-0472">Membrane</keyword>
<keyword id="KW-1185">Reference proteome</keyword>
<keyword id="KW-0812">Transmembrane</keyword>
<keyword id="KW-1133">Transmembrane helix</keyword>
<gene>
    <name type="primary">yfkC</name>
    <name type="ordered locus">BSU07940</name>
</gene>
<evidence type="ECO:0000255" key="1"/>
<evidence type="ECO:0000269" key="2">
    <source>
    </source>
</evidence>
<evidence type="ECO:0000269" key="3">
    <source>
    </source>
</evidence>
<evidence type="ECO:0000305" key="4"/>
<organism>
    <name type="scientific">Bacillus subtilis (strain 168)</name>
    <dbReference type="NCBI Taxonomy" id="224308"/>
    <lineage>
        <taxon>Bacteria</taxon>
        <taxon>Bacillati</taxon>
        <taxon>Bacillota</taxon>
        <taxon>Bacilli</taxon>
        <taxon>Bacillales</taxon>
        <taxon>Bacillaceae</taxon>
        <taxon>Bacillus</taxon>
    </lineage>
</organism>
<dbReference type="EMBL" id="D83967">
    <property type="protein sequence ID" value="BAA23393.1"/>
    <property type="molecule type" value="Genomic_DNA"/>
</dbReference>
<dbReference type="EMBL" id="AL009126">
    <property type="protein sequence ID" value="CAB12623.1"/>
    <property type="molecule type" value="Genomic_DNA"/>
</dbReference>
<dbReference type="PIR" id="G69807">
    <property type="entry name" value="G69807"/>
</dbReference>
<dbReference type="RefSeq" id="WP_010886444.1">
    <property type="nucleotide sequence ID" value="NZ_OZ025638.1"/>
</dbReference>
<dbReference type="SMR" id="O35043"/>
<dbReference type="FunCoup" id="O35043">
    <property type="interactions" value="116"/>
</dbReference>
<dbReference type="STRING" id="224308.BSU07940"/>
<dbReference type="PaxDb" id="224308-BSU07940"/>
<dbReference type="EnsemblBacteria" id="CAB12623">
    <property type="protein sequence ID" value="CAB12623"/>
    <property type="gene ID" value="BSU_07940"/>
</dbReference>
<dbReference type="GeneID" id="936137"/>
<dbReference type="KEGG" id="bsu:BSU07940"/>
<dbReference type="PATRIC" id="fig|224308.43.peg.834"/>
<dbReference type="eggNOG" id="COG0668">
    <property type="taxonomic scope" value="Bacteria"/>
</dbReference>
<dbReference type="InParanoid" id="O35043"/>
<dbReference type="OrthoDB" id="9809206at2"/>
<dbReference type="PhylomeDB" id="O35043"/>
<dbReference type="BioCyc" id="BSUB:BSU07940-MONOMER"/>
<dbReference type="Proteomes" id="UP000001570">
    <property type="component" value="Chromosome"/>
</dbReference>
<dbReference type="GO" id="GO:0005886">
    <property type="term" value="C:plasma membrane"/>
    <property type="evidence" value="ECO:0007669"/>
    <property type="project" value="UniProtKB-SubCell"/>
</dbReference>
<dbReference type="GO" id="GO:0008381">
    <property type="term" value="F:mechanosensitive monoatomic ion channel activity"/>
    <property type="evidence" value="ECO:0007669"/>
    <property type="project" value="InterPro"/>
</dbReference>
<dbReference type="FunFam" id="2.30.30.60:FF:000001">
    <property type="entry name" value="MscS Mechanosensitive ion channel"/>
    <property type="match status" value="1"/>
</dbReference>
<dbReference type="Gene3D" id="1.10.287.1260">
    <property type="match status" value="1"/>
</dbReference>
<dbReference type="Gene3D" id="2.30.30.60">
    <property type="match status" value="1"/>
</dbReference>
<dbReference type="Gene3D" id="3.30.70.100">
    <property type="match status" value="1"/>
</dbReference>
<dbReference type="InterPro" id="IPR010920">
    <property type="entry name" value="LSM_dom_sf"/>
</dbReference>
<dbReference type="InterPro" id="IPR023408">
    <property type="entry name" value="MscS_beta-dom_sf"/>
</dbReference>
<dbReference type="InterPro" id="IPR006685">
    <property type="entry name" value="MscS_channel_2nd"/>
</dbReference>
<dbReference type="InterPro" id="IPR011014">
    <property type="entry name" value="MscS_channel_TM-2"/>
</dbReference>
<dbReference type="InterPro" id="IPR045276">
    <property type="entry name" value="YbiO_bact"/>
</dbReference>
<dbReference type="PANTHER" id="PTHR30460:SF1">
    <property type="entry name" value="MECHANOSENSITIVE ION CHANNEL"/>
    <property type="match status" value="1"/>
</dbReference>
<dbReference type="PANTHER" id="PTHR30460">
    <property type="entry name" value="MODERATE CONDUCTANCE MECHANOSENSITIVE CHANNEL YBIO"/>
    <property type="match status" value="1"/>
</dbReference>
<dbReference type="Pfam" id="PF00924">
    <property type="entry name" value="MS_channel_2nd"/>
    <property type="match status" value="1"/>
</dbReference>
<dbReference type="SUPFAM" id="SSF82861">
    <property type="entry name" value="Mechanosensitive channel protein MscS (YggB), transmembrane region"/>
    <property type="match status" value="1"/>
</dbReference>
<dbReference type="SUPFAM" id="SSF50182">
    <property type="entry name" value="Sm-like ribonucleoproteins"/>
    <property type="match status" value="1"/>
</dbReference>
<protein>
    <recommendedName>
        <fullName>Uncharacterized MscS family protein YfkC</fullName>
    </recommendedName>
</protein>
<reference key="1">
    <citation type="journal article" date="1996" name="Microbiology">
        <title>Cloning and sequencing of a 40.6 kb segment in the 73 degrees-76 degrees region of the Bacillus subtilis chromosome containing genes for trehalose metabolism and acetoin utilization.</title>
        <authorList>
            <person name="Yamamoto H."/>
            <person name="Uchiyama S."/>
            <person name="Sekiguchi J."/>
        </authorList>
    </citation>
    <scope>NUCLEOTIDE SEQUENCE [GENOMIC DNA]</scope>
    <source>
        <strain>168 / AC327</strain>
    </source>
</reference>
<reference key="2">
    <citation type="journal article" date="1997" name="Nature">
        <title>The complete genome sequence of the Gram-positive bacterium Bacillus subtilis.</title>
        <authorList>
            <person name="Kunst F."/>
            <person name="Ogasawara N."/>
            <person name="Moszer I."/>
            <person name="Albertini A.M."/>
            <person name="Alloni G."/>
            <person name="Azevedo V."/>
            <person name="Bertero M.G."/>
            <person name="Bessieres P."/>
            <person name="Bolotin A."/>
            <person name="Borchert S."/>
            <person name="Borriss R."/>
            <person name="Boursier L."/>
            <person name="Brans A."/>
            <person name="Braun M."/>
            <person name="Brignell S.C."/>
            <person name="Bron S."/>
            <person name="Brouillet S."/>
            <person name="Bruschi C.V."/>
            <person name="Caldwell B."/>
            <person name="Capuano V."/>
            <person name="Carter N.M."/>
            <person name="Choi S.-K."/>
            <person name="Codani J.-J."/>
            <person name="Connerton I.F."/>
            <person name="Cummings N.J."/>
            <person name="Daniel R.A."/>
            <person name="Denizot F."/>
            <person name="Devine K.M."/>
            <person name="Duesterhoeft A."/>
            <person name="Ehrlich S.D."/>
            <person name="Emmerson P.T."/>
            <person name="Entian K.-D."/>
            <person name="Errington J."/>
            <person name="Fabret C."/>
            <person name="Ferrari E."/>
            <person name="Foulger D."/>
            <person name="Fritz C."/>
            <person name="Fujita M."/>
            <person name="Fujita Y."/>
            <person name="Fuma S."/>
            <person name="Galizzi A."/>
            <person name="Galleron N."/>
            <person name="Ghim S.-Y."/>
            <person name="Glaser P."/>
            <person name="Goffeau A."/>
            <person name="Golightly E.J."/>
            <person name="Grandi G."/>
            <person name="Guiseppi G."/>
            <person name="Guy B.J."/>
            <person name="Haga K."/>
            <person name="Haiech J."/>
            <person name="Harwood C.R."/>
            <person name="Henaut A."/>
            <person name="Hilbert H."/>
            <person name="Holsappel S."/>
            <person name="Hosono S."/>
            <person name="Hullo M.-F."/>
            <person name="Itaya M."/>
            <person name="Jones L.-M."/>
            <person name="Joris B."/>
            <person name="Karamata D."/>
            <person name="Kasahara Y."/>
            <person name="Klaerr-Blanchard M."/>
            <person name="Klein C."/>
            <person name="Kobayashi Y."/>
            <person name="Koetter P."/>
            <person name="Koningstein G."/>
            <person name="Krogh S."/>
            <person name="Kumano M."/>
            <person name="Kurita K."/>
            <person name="Lapidus A."/>
            <person name="Lardinois S."/>
            <person name="Lauber J."/>
            <person name="Lazarevic V."/>
            <person name="Lee S.-M."/>
            <person name="Levine A."/>
            <person name="Liu H."/>
            <person name="Masuda S."/>
            <person name="Mauel C."/>
            <person name="Medigue C."/>
            <person name="Medina N."/>
            <person name="Mellado R.P."/>
            <person name="Mizuno M."/>
            <person name="Moestl D."/>
            <person name="Nakai S."/>
            <person name="Noback M."/>
            <person name="Noone D."/>
            <person name="O'Reilly M."/>
            <person name="Ogawa K."/>
            <person name="Ogiwara A."/>
            <person name="Oudega B."/>
            <person name="Park S.-H."/>
            <person name="Parro V."/>
            <person name="Pohl T.M."/>
            <person name="Portetelle D."/>
            <person name="Porwollik S."/>
            <person name="Prescott A.M."/>
            <person name="Presecan E."/>
            <person name="Pujic P."/>
            <person name="Purnelle B."/>
            <person name="Rapoport G."/>
            <person name="Rey M."/>
            <person name="Reynolds S."/>
            <person name="Rieger M."/>
            <person name="Rivolta C."/>
            <person name="Rocha E."/>
            <person name="Roche B."/>
            <person name="Rose M."/>
            <person name="Sadaie Y."/>
            <person name="Sato T."/>
            <person name="Scanlan E."/>
            <person name="Schleich S."/>
            <person name="Schroeter R."/>
            <person name="Scoffone F."/>
            <person name="Sekiguchi J."/>
            <person name="Sekowska A."/>
            <person name="Seror S.J."/>
            <person name="Serror P."/>
            <person name="Shin B.-S."/>
            <person name="Soldo B."/>
            <person name="Sorokin A."/>
            <person name="Tacconi E."/>
            <person name="Takagi T."/>
            <person name="Takahashi H."/>
            <person name="Takemaru K."/>
            <person name="Takeuchi M."/>
            <person name="Tamakoshi A."/>
            <person name="Tanaka T."/>
            <person name="Terpstra P."/>
            <person name="Tognoni A."/>
            <person name="Tosato V."/>
            <person name="Uchiyama S."/>
            <person name="Vandenbol M."/>
            <person name="Vannier F."/>
            <person name="Vassarotti A."/>
            <person name="Viari A."/>
            <person name="Wambutt R."/>
            <person name="Wedler E."/>
            <person name="Wedler H."/>
            <person name="Weitzenegger T."/>
            <person name="Winters P."/>
            <person name="Wipat A."/>
            <person name="Yamamoto H."/>
            <person name="Yamane K."/>
            <person name="Yasumoto K."/>
            <person name="Yata K."/>
            <person name="Yoshida K."/>
            <person name="Yoshikawa H.-F."/>
            <person name="Zumstein E."/>
            <person name="Yoshikawa H."/>
            <person name="Danchin A."/>
        </authorList>
    </citation>
    <scope>NUCLEOTIDE SEQUENCE [LARGE SCALE GENOMIC DNA]</scope>
    <source>
        <strain>168</strain>
    </source>
</reference>
<reference key="3">
    <citation type="journal article" date="2008" name="Appl. Environ. Microbiol.">
        <title>Responses of Bacillus subtilis to hypotonic challenges: physiological contributions of mechanosensitive channels to cellular survival.</title>
        <authorList>
            <person name="Hoffmann T."/>
            <person name="Boiangiu C."/>
            <person name="Moses S."/>
            <person name="Bremer E."/>
        </authorList>
    </citation>
    <scope>DISRUPTION PHENOTYPE</scope>
    <source>
        <strain>168 / JH642</strain>
    </source>
</reference>
<reference key="4">
    <citation type="journal article" date="2008" name="Arch. Microbiol.">
        <title>Growth, osmotic downshock resistance and differentiation of Bacillus subtilis strains lacking mechanosensitive channels.</title>
        <authorList>
            <person name="Wahome P.G."/>
            <person name="Setlow P."/>
        </authorList>
    </citation>
    <scope>FUNCTION</scope>
    <scope>INDUCTION</scope>
    <scope>DISRUPTION PHENOTYPE</scope>
    <source>
        <strain>168 / PS832</strain>
    </source>
</reference>
<comment type="function">
    <text evidence="2">May play a role in resistance to osmotic downshock.</text>
</comment>
<comment type="subcellular location">
    <subcellularLocation>
        <location evidence="4">Cell membrane</location>
        <topology evidence="4">Multi-pass membrane protein</topology>
    </subcellularLocation>
</comment>
<comment type="induction">
    <text evidence="2">Induced by high salt concentrations.</text>
</comment>
<comment type="disruption phenotype">
    <text evidence="2 3">Cells lacking this gene grow normally in minimal medium or in high-osmolarity environments, and exhibit the same survival capacity as the wild-type strain upon a drastic osmotic downshift. They sporulate and germinate normally.</text>
</comment>
<comment type="similarity">
    <text evidence="4">Belongs to the MscS (TC 1.A.23) family.</text>
</comment>
<accession>O35043</accession>
<accession>Q79EY4</accession>
<proteinExistence type="evidence at transcript level"/>
<name>YFKC_BACSU</name>
<feature type="chain" id="PRO_0000367892" description="Uncharacterized MscS family protein YfkC">
    <location>
        <begin position="1"/>
        <end position="280"/>
    </location>
</feature>
<feature type="transmembrane region" description="Helical" evidence="1">
    <location>
        <begin position="15"/>
        <end position="35"/>
    </location>
</feature>
<feature type="transmembrane region" description="Helical" evidence="1">
    <location>
        <begin position="68"/>
        <end position="88"/>
    </location>
</feature>
<feature type="transmembrane region" description="Helical" evidence="1">
    <location>
        <begin position="94"/>
        <end position="114"/>
    </location>
</feature>
<sequence>MRMKETLTEIFQNKIVDILLVAVILWIGVFIINRLVQLFFKRTDFIEEKKEKTIESLVRSVTQYTATIGFIFYVISLFVHDFGKILAGAGVAGIVIGFGAQSLIKDVLAGVFLIYERQLHKGDYVTVNNLFNGTVEEIGLRSLQIREWSGKLLTISNGEVRQIENYNIDFMRITESFLISFKEDPDRVYSVLEEACDMLNEELRDSLKRDEFGNPTEPFQIHGITALNKINRGVEFTVKGMVKDDDYFSASLAVRRVLVRQLYQNNVQMLEEAVRIERTQ</sequence>